<comment type="function">
    <text>Defense against chitin-containing fungal pathogens.</text>
</comment>
<comment type="catalytic activity">
    <reaction>
        <text>Random endo-hydrolysis of N-acetyl-beta-D-glucosaminide (1-&gt;4)-beta-linkages in chitin and chitodextrins.</text>
        <dbReference type="EC" id="3.2.1.14"/>
    </reaction>
</comment>
<comment type="similarity">
    <text evidence="2">Belongs to the glycosyl hydrolase 19 family. Chitinase class II subfamily.</text>
</comment>
<organism>
    <name type="scientific">Hordeum vulgare</name>
    <name type="common">Barley</name>
    <dbReference type="NCBI Taxonomy" id="4513"/>
    <lineage>
        <taxon>Eukaryota</taxon>
        <taxon>Viridiplantae</taxon>
        <taxon>Streptophyta</taxon>
        <taxon>Embryophyta</taxon>
        <taxon>Tracheophyta</taxon>
        <taxon>Spermatophyta</taxon>
        <taxon>Magnoliopsida</taxon>
        <taxon>Liliopsida</taxon>
        <taxon>Poales</taxon>
        <taxon>Poaceae</taxon>
        <taxon>BOP clade</taxon>
        <taxon>Pooideae</taxon>
        <taxon>Triticodae</taxon>
        <taxon>Triticeae</taxon>
        <taxon>Hordeinae</taxon>
        <taxon>Hordeum</taxon>
    </lineage>
</organism>
<evidence type="ECO:0000250" key="1">
    <source>
        <dbReference type="UniProtKB" id="P29022"/>
    </source>
</evidence>
<evidence type="ECO:0000305" key="2"/>
<evidence type="ECO:0007829" key="3">
    <source>
        <dbReference type="PDB" id="1CNS"/>
    </source>
</evidence>
<evidence type="ECO:0007829" key="4">
    <source>
        <dbReference type="PDB" id="2BAA"/>
    </source>
</evidence>
<reference key="1">
    <citation type="journal article" date="1991" name="J. Biol. Chem.">
        <title>Biochemical and molecular characterization of three barley seed proteins with antifungal properties.</title>
        <authorList>
            <person name="Leah R."/>
            <person name="Tommerup H."/>
            <person name="Svendsen I."/>
            <person name="Mundy J."/>
        </authorList>
    </citation>
    <scope>NUCLEOTIDE SEQUENCE [MRNA]</scope>
    <scope>PARTIAL PROTEIN SEQUENCE</scope>
    <source>
        <strain>cv. Piggy</strain>
    </source>
</reference>
<reference key="2">
    <citation type="journal article" date="1987" name="Carlsberg Res. Commun.">
        <title>Identification of a 28,000 dalton endochitinase in barley endosperm.</title>
        <authorList>
            <person name="Leah R."/>
            <person name="Mikkelsen J.D."/>
            <person name="Mundy J."/>
            <person name="Svendsen I."/>
        </authorList>
    </citation>
    <scope>PRELIMINARY PROTEIN SEQUENCE OF 24-77 AND 148-188</scope>
    <source>
        <tissue>Endosperm</tissue>
    </source>
</reference>
<reference key="3">
    <citation type="journal article" date="1993" name="J. Mol. Biol.">
        <title>Crystal structure of an endochitinase from Hordeum vulgare L. seeds.</title>
        <authorList>
            <person name="Hart P.J."/>
            <person name="Monzingo A.F."/>
            <person name="Ready M.P."/>
            <person name="Ernst S.R."/>
            <person name="Robertus J.D."/>
        </authorList>
    </citation>
    <scope>X-RAY CRYSTALLOGRAPHY (2.8 ANGSTROMS)</scope>
    <source>
        <tissue>Seed</tissue>
    </source>
</reference>
<name>CHI2_HORVU</name>
<accession>P23951</accession>
<protein>
    <recommendedName>
        <fullName>26 kDa endochitinase 2</fullName>
        <ecNumber>3.2.1.14</ecNumber>
    </recommendedName>
    <alternativeName>
        <fullName>CHI-26</fullName>
    </alternativeName>
</protein>
<proteinExistence type="evidence at protein level"/>
<sequence length="266" mass="28156">MRSLAVVVAVVATVAMAIGTARGSVSSIVSRAQFDRMLLHRNDGACQAKGFYTYDAFVAAAAAFPGFGTTGSADAQKREVAAFLAQTSHETTGGWATAPDGAFAWGYCFKQERGASSDYCTPSAQWPCAPGKRYYGRGPIQLSHNYNYGPAGRAIGVDLLANPDLVATDATVGFKTAIWFWMTAQPPKPSSHAVIAGQWSPSGADRAAGRVPGFGVITNIINGGIECGHGQDSRVADRIGFYKRYCDILGVGYGNNLDCYSQRPFA</sequence>
<dbReference type="EC" id="3.2.1.14"/>
<dbReference type="EMBL" id="L34210">
    <property type="protein sequence ID" value="AAA56786.1"/>
    <property type="molecule type" value="Genomic_DNA"/>
</dbReference>
<dbReference type="EMBL" id="M62904">
    <property type="protein sequence ID" value="AAA32941.1"/>
    <property type="molecule type" value="mRNA"/>
</dbReference>
<dbReference type="PIR" id="A29104">
    <property type="entry name" value="A29104"/>
</dbReference>
<dbReference type="PIR" id="A38664">
    <property type="entry name" value="A38664"/>
</dbReference>
<dbReference type="PDB" id="1CNS">
    <property type="method" value="X-ray"/>
    <property type="resolution" value="1.91 A"/>
    <property type="chains" value="A/B=24-266"/>
</dbReference>
<dbReference type="PDB" id="2BAA">
    <property type="method" value="X-ray"/>
    <property type="resolution" value="1.80 A"/>
    <property type="chains" value="A=24-266"/>
</dbReference>
<dbReference type="PDBsum" id="1CNS"/>
<dbReference type="PDBsum" id="2BAA"/>
<dbReference type="SMR" id="P23951"/>
<dbReference type="CAZy" id="GH19">
    <property type="family name" value="Glycoside Hydrolase Family 19"/>
</dbReference>
<dbReference type="BRENDA" id="3.2.1.14">
    <property type="organism ID" value="2687"/>
</dbReference>
<dbReference type="EvolutionaryTrace" id="P23951"/>
<dbReference type="ExpressionAtlas" id="P23951">
    <property type="expression patterns" value="baseline and differential"/>
</dbReference>
<dbReference type="GO" id="GO:0008843">
    <property type="term" value="F:endochitinase activity"/>
    <property type="evidence" value="ECO:0007669"/>
    <property type="project" value="UniProtKB-EC"/>
</dbReference>
<dbReference type="GO" id="GO:0016998">
    <property type="term" value="P:cell wall macromolecule catabolic process"/>
    <property type="evidence" value="ECO:0007669"/>
    <property type="project" value="InterPro"/>
</dbReference>
<dbReference type="GO" id="GO:0006032">
    <property type="term" value="P:chitin catabolic process"/>
    <property type="evidence" value="ECO:0007669"/>
    <property type="project" value="UniProtKB-KW"/>
</dbReference>
<dbReference type="GO" id="GO:0050832">
    <property type="term" value="P:defense response to fungus"/>
    <property type="evidence" value="ECO:0007669"/>
    <property type="project" value="TreeGrafter"/>
</dbReference>
<dbReference type="GO" id="GO:0000272">
    <property type="term" value="P:polysaccharide catabolic process"/>
    <property type="evidence" value="ECO:0007669"/>
    <property type="project" value="UniProtKB-KW"/>
</dbReference>
<dbReference type="CDD" id="cd00325">
    <property type="entry name" value="chitinase_GH19"/>
    <property type="match status" value="1"/>
</dbReference>
<dbReference type="FunFam" id="3.30.20.10:FF:000001">
    <property type="entry name" value="Endochitinase (Chitinase)"/>
    <property type="match status" value="1"/>
</dbReference>
<dbReference type="Gene3D" id="1.10.530.10">
    <property type="match status" value="1"/>
</dbReference>
<dbReference type="Gene3D" id="3.30.20.10">
    <property type="entry name" value="Endochitinase, domain 2"/>
    <property type="match status" value="1"/>
</dbReference>
<dbReference type="InterPro" id="IPR016283">
    <property type="entry name" value="Glyco_hydro_19"/>
</dbReference>
<dbReference type="InterPro" id="IPR000726">
    <property type="entry name" value="Glyco_hydro_19_cat"/>
</dbReference>
<dbReference type="InterPro" id="IPR023346">
    <property type="entry name" value="Lysozyme-like_dom_sf"/>
</dbReference>
<dbReference type="PANTHER" id="PTHR22595:SF127">
    <property type="entry name" value="CHITINASE"/>
    <property type="match status" value="1"/>
</dbReference>
<dbReference type="PANTHER" id="PTHR22595">
    <property type="entry name" value="CHITINASE-RELATED"/>
    <property type="match status" value="1"/>
</dbReference>
<dbReference type="Pfam" id="PF00182">
    <property type="entry name" value="Glyco_hydro_19"/>
    <property type="match status" value="1"/>
</dbReference>
<dbReference type="PIRSF" id="PIRSF001060">
    <property type="entry name" value="Endochitinase"/>
    <property type="match status" value="1"/>
</dbReference>
<dbReference type="SUPFAM" id="SSF53955">
    <property type="entry name" value="Lysozyme-like"/>
    <property type="match status" value="1"/>
</dbReference>
<dbReference type="PROSITE" id="PS00773">
    <property type="entry name" value="CHITINASE_19_1"/>
    <property type="match status" value="1"/>
</dbReference>
<dbReference type="PROSITE" id="PS00774">
    <property type="entry name" value="CHITINASE_19_2"/>
    <property type="match status" value="1"/>
</dbReference>
<feature type="signal peptide">
    <location>
        <begin position="1"/>
        <end position="23"/>
    </location>
</feature>
<feature type="chain" id="PRO_0000005297" description="26 kDa endochitinase 2">
    <location>
        <begin position="24"/>
        <end position="266"/>
    </location>
</feature>
<feature type="active site" description="Proton donor" evidence="1">
    <location>
        <position position="90"/>
    </location>
</feature>
<feature type="disulfide bond">
    <location>
        <begin position="46"/>
        <end position="108"/>
    </location>
</feature>
<feature type="disulfide bond">
    <location>
        <begin position="120"/>
        <end position="128"/>
    </location>
</feature>
<feature type="disulfide bond">
    <location>
        <begin position="227"/>
        <end position="259"/>
    </location>
</feature>
<feature type="sequence variant">
    <original>D</original>
    <variation>S</variation>
    <location>
        <position position="205"/>
    </location>
</feature>
<feature type="sequence conflict" description="In Ref. 1; AA sequence." evidence="2" ref="1">
    <original>G</original>
    <variation>A</variation>
    <location>
        <position position="173"/>
    </location>
</feature>
<feature type="sequence conflict" description="In Ref. 1; AA sequence." evidence="2" ref="1">
    <original>D</original>
    <variation>S</variation>
    <location>
        <position position="205"/>
    </location>
</feature>
<feature type="helix" evidence="4">
    <location>
        <begin position="25"/>
        <end position="27"/>
    </location>
</feature>
<feature type="helix" evidence="4">
    <location>
        <begin position="31"/>
        <end position="37"/>
    </location>
</feature>
<feature type="turn" evidence="4">
    <location>
        <begin position="38"/>
        <end position="42"/>
    </location>
</feature>
<feature type="turn" evidence="4">
    <location>
        <begin position="47"/>
        <end position="51"/>
    </location>
</feature>
<feature type="helix" evidence="4">
    <location>
        <begin position="54"/>
        <end position="61"/>
    </location>
</feature>
<feature type="turn" evidence="4">
    <location>
        <begin position="65"/>
        <end position="68"/>
    </location>
</feature>
<feature type="strand" evidence="3">
    <location>
        <begin position="70"/>
        <end position="72"/>
    </location>
</feature>
<feature type="helix" evidence="4">
    <location>
        <begin position="73"/>
        <end position="90"/>
    </location>
</feature>
<feature type="helix" evidence="4">
    <location>
        <begin position="102"/>
        <end position="104"/>
    </location>
</feature>
<feature type="strand" evidence="4">
    <location>
        <begin position="124"/>
        <end position="126"/>
    </location>
</feature>
<feature type="turn" evidence="4">
    <location>
        <begin position="138"/>
        <end position="141"/>
    </location>
</feature>
<feature type="helix" evidence="4">
    <location>
        <begin position="145"/>
        <end position="155"/>
    </location>
</feature>
<feature type="turn" evidence="4">
    <location>
        <begin position="159"/>
        <end position="161"/>
    </location>
</feature>
<feature type="helix" evidence="4">
    <location>
        <begin position="165"/>
        <end position="168"/>
    </location>
</feature>
<feature type="helix" evidence="4">
    <location>
        <begin position="170"/>
        <end position="182"/>
    </location>
</feature>
<feature type="helix" evidence="4">
    <location>
        <begin position="191"/>
        <end position="195"/>
    </location>
</feature>
<feature type="helix" evidence="4">
    <location>
        <begin position="203"/>
        <end position="207"/>
    </location>
</feature>
<feature type="helix" evidence="4">
    <location>
        <begin position="214"/>
        <end position="226"/>
    </location>
</feature>
<feature type="strand" evidence="4">
    <location>
        <begin position="227"/>
        <end position="230"/>
    </location>
</feature>
<feature type="helix" evidence="4">
    <location>
        <begin position="233"/>
        <end position="249"/>
    </location>
</feature>
<keyword id="KW-0002">3D-structure</keyword>
<keyword id="KW-0119">Carbohydrate metabolism</keyword>
<keyword id="KW-0146">Chitin degradation</keyword>
<keyword id="KW-0903">Direct protein sequencing</keyword>
<keyword id="KW-1015">Disulfide bond</keyword>
<keyword id="KW-0326">Glycosidase</keyword>
<keyword id="KW-0378">Hydrolase</keyword>
<keyword id="KW-0611">Plant defense</keyword>
<keyword id="KW-0624">Polysaccharide degradation</keyword>
<keyword id="KW-0732">Signal</keyword>